<name>HDHD3_HUMAN</name>
<accession>Q9BSH5</accession>
<accession>B2RD47</accession>
<reference key="1">
    <citation type="journal article" date="2004" name="Nat. Genet.">
        <title>Complete sequencing and characterization of 21,243 full-length human cDNAs.</title>
        <authorList>
            <person name="Ota T."/>
            <person name="Suzuki Y."/>
            <person name="Nishikawa T."/>
            <person name="Otsuki T."/>
            <person name="Sugiyama T."/>
            <person name="Irie R."/>
            <person name="Wakamatsu A."/>
            <person name="Hayashi K."/>
            <person name="Sato H."/>
            <person name="Nagai K."/>
            <person name="Kimura K."/>
            <person name="Makita H."/>
            <person name="Sekine M."/>
            <person name="Obayashi M."/>
            <person name="Nishi T."/>
            <person name="Shibahara T."/>
            <person name="Tanaka T."/>
            <person name="Ishii S."/>
            <person name="Yamamoto J."/>
            <person name="Saito K."/>
            <person name="Kawai Y."/>
            <person name="Isono Y."/>
            <person name="Nakamura Y."/>
            <person name="Nagahari K."/>
            <person name="Murakami K."/>
            <person name="Yasuda T."/>
            <person name="Iwayanagi T."/>
            <person name="Wagatsuma M."/>
            <person name="Shiratori A."/>
            <person name="Sudo H."/>
            <person name="Hosoiri T."/>
            <person name="Kaku Y."/>
            <person name="Kodaira H."/>
            <person name="Kondo H."/>
            <person name="Sugawara M."/>
            <person name="Takahashi M."/>
            <person name="Kanda K."/>
            <person name="Yokoi T."/>
            <person name="Furuya T."/>
            <person name="Kikkawa E."/>
            <person name="Omura Y."/>
            <person name="Abe K."/>
            <person name="Kamihara K."/>
            <person name="Katsuta N."/>
            <person name="Sato K."/>
            <person name="Tanikawa M."/>
            <person name="Yamazaki M."/>
            <person name="Ninomiya K."/>
            <person name="Ishibashi T."/>
            <person name="Yamashita H."/>
            <person name="Murakawa K."/>
            <person name="Fujimori K."/>
            <person name="Tanai H."/>
            <person name="Kimata M."/>
            <person name="Watanabe M."/>
            <person name="Hiraoka S."/>
            <person name="Chiba Y."/>
            <person name="Ishida S."/>
            <person name="Ono Y."/>
            <person name="Takiguchi S."/>
            <person name="Watanabe S."/>
            <person name="Yosida M."/>
            <person name="Hotuta T."/>
            <person name="Kusano J."/>
            <person name="Kanehori K."/>
            <person name="Takahashi-Fujii A."/>
            <person name="Hara H."/>
            <person name="Tanase T.-O."/>
            <person name="Nomura Y."/>
            <person name="Togiya S."/>
            <person name="Komai F."/>
            <person name="Hara R."/>
            <person name="Takeuchi K."/>
            <person name="Arita M."/>
            <person name="Imose N."/>
            <person name="Musashino K."/>
            <person name="Yuuki H."/>
            <person name="Oshima A."/>
            <person name="Sasaki N."/>
            <person name="Aotsuka S."/>
            <person name="Yoshikawa Y."/>
            <person name="Matsunawa H."/>
            <person name="Ichihara T."/>
            <person name="Shiohata N."/>
            <person name="Sano S."/>
            <person name="Moriya S."/>
            <person name="Momiyama H."/>
            <person name="Satoh N."/>
            <person name="Takami S."/>
            <person name="Terashima Y."/>
            <person name="Suzuki O."/>
            <person name="Nakagawa S."/>
            <person name="Senoh A."/>
            <person name="Mizoguchi H."/>
            <person name="Goto Y."/>
            <person name="Shimizu F."/>
            <person name="Wakebe H."/>
            <person name="Hishigaki H."/>
            <person name="Watanabe T."/>
            <person name="Sugiyama A."/>
            <person name="Takemoto M."/>
            <person name="Kawakami B."/>
            <person name="Yamazaki M."/>
            <person name="Watanabe K."/>
            <person name="Kumagai A."/>
            <person name="Itakura S."/>
            <person name="Fukuzumi Y."/>
            <person name="Fujimori Y."/>
            <person name="Komiyama M."/>
            <person name="Tashiro H."/>
            <person name="Tanigami A."/>
            <person name="Fujiwara T."/>
            <person name="Ono T."/>
            <person name="Yamada K."/>
            <person name="Fujii Y."/>
            <person name="Ozaki K."/>
            <person name="Hirao M."/>
            <person name="Ohmori Y."/>
            <person name="Kawabata A."/>
            <person name="Hikiji T."/>
            <person name="Kobatake N."/>
            <person name="Inagaki H."/>
            <person name="Ikema Y."/>
            <person name="Okamoto S."/>
            <person name="Okitani R."/>
            <person name="Kawakami T."/>
            <person name="Noguchi S."/>
            <person name="Itoh T."/>
            <person name="Shigeta K."/>
            <person name="Senba T."/>
            <person name="Matsumura K."/>
            <person name="Nakajima Y."/>
            <person name="Mizuno T."/>
            <person name="Morinaga M."/>
            <person name="Sasaki M."/>
            <person name="Togashi T."/>
            <person name="Oyama M."/>
            <person name="Hata H."/>
            <person name="Watanabe M."/>
            <person name="Komatsu T."/>
            <person name="Mizushima-Sugano J."/>
            <person name="Satoh T."/>
            <person name="Shirai Y."/>
            <person name="Takahashi Y."/>
            <person name="Nakagawa K."/>
            <person name="Okumura K."/>
            <person name="Nagase T."/>
            <person name="Nomura N."/>
            <person name="Kikuchi H."/>
            <person name="Masuho Y."/>
            <person name="Yamashita R."/>
            <person name="Nakai K."/>
            <person name="Yada T."/>
            <person name="Nakamura Y."/>
            <person name="Ohara O."/>
            <person name="Isogai T."/>
            <person name="Sugano S."/>
        </authorList>
    </citation>
    <scope>NUCLEOTIDE SEQUENCE [LARGE SCALE MRNA]</scope>
    <source>
        <tissue>Colon</tissue>
    </source>
</reference>
<reference key="2">
    <citation type="journal article" date="2004" name="Nature">
        <title>DNA sequence and analysis of human chromosome 9.</title>
        <authorList>
            <person name="Humphray S.J."/>
            <person name="Oliver K."/>
            <person name="Hunt A.R."/>
            <person name="Plumb R.W."/>
            <person name="Loveland J.E."/>
            <person name="Howe K.L."/>
            <person name="Andrews T.D."/>
            <person name="Searle S."/>
            <person name="Hunt S.E."/>
            <person name="Scott C.E."/>
            <person name="Jones M.C."/>
            <person name="Ainscough R."/>
            <person name="Almeida J.P."/>
            <person name="Ambrose K.D."/>
            <person name="Ashwell R.I.S."/>
            <person name="Babbage A.K."/>
            <person name="Babbage S."/>
            <person name="Bagguley C.L."/>
            <person name="Bailey J."/>
            <person name="Banerjee R."/>
            <person name="Barker D.J."/>
            <person name="Barlow K.F."/>
            <person name="Bates K."/>
            <person name="Beasley H."/>
            <person name="Beasley O."/>
            <person name="Bird C.P."/>
            <person name="Bray-Allen S."/>
            <person name="Brown A.J."/>
            <person name="Brown J.Y."/>
            <person name="Burford D."/>
            <person name="Burrill W."/>
            <person name="Burton J."/>
            <person name="Carder C."/>
            <person name="Carter N.P."/>
            <person name="Chapman J.C."/>
            <person name="Chen Y."/>
            <person name="Clarke G."/>
            <person name="Clark S.Y."/>
            <person name="Clee C.M."/>
            <person name="Clegg S."/>
            <person name="Collier R.E."/>
            <person name="Corby N."/>
            <person name="Crosier M."/>
            <person name="Cummings A.T."/>
            <person name="Davies J."/>
            <person name="Dhami P."/>
            <person name="Dunn M."/>
            <person name="Dutta I."/>
            <person name="Dyer L.W."/>
            <person name="Earthrowl M.E."/>
            <person name="Faulkner L."/>
            <person name="Fleming C.J."/>
            <person name="Frankish A."/>
            <person name="Frankland J.A."/>
            <person name="French L."/>
            <person name="Fricker D.G."/>
            <person name="Garner P."/>
            <person name="Garnett J."/>
            <person name="Ghori J."/>
            <person name="Gilbert J.G.R."/>
            <person name="Glison C."/>
            <person name="Grafham D.V."/>
            <person name="Gribble S."/>
            <person name="Griffiths C."/>
            <person name="Griffiths-Jones S."/>
            <person name="Grocock R."/>
            <person name="Guy J."/>
            <person name="Hall R.E."/>
            <person name="Hammond S."/>
            <person name="Harley J.L."/>
            <person name="Harrison E.S.I."/>
            <person name="Hart E.A."/>
            <person name="Heath P.D."/>
            <person name="Henderson C.D."/>
            <person name="Hopkins B.L."/>
            <person name="Howard P.J."/>
            <person name="Howden P.J."/>
            <person name="Huckle E."/>
            <person name="Johnson C."/>
            <person name="Johnson D."/>
            <person name="Joy A.A."/>
            <person name="Kay M."/>
            <person name="Keenan S."/>
            <person name="Kershaw J.K."/>
            <person name="Kimberley A.M."/>
            <person name="King A."/>
            <person name="Knights A."/>
            <person name="Laird G.K."/>
            <person name="Langford C."/>
            <person name="Lawlor S."/>
            <person name="Leongamornlert D.A."/>
            <person name="Leversha M."/>
            <person name="Lloyd C."/>
            <person name="Lloyd D.M."/>
            <person name="Lovell J."/>
            <person name="Martin S."/>
            <person name="Mashreghi-Mohammadi M."/>
            <person name="Matthews L."/>
            <person name="McLaren S."/>
            <person name="McLay K.E."/>
            <person name="McMurray A."/>
            <person name="Milne S."/>
            <person name="Nickerson T."/>
            <person name="Nisbett J."/>
            <person name="Nordsiek G."/>
            <person name="Pearce A.V."/>
            <person name="Peck A.I."/>
            <person name="Porter K.M."/>
            <person name="Pandian R."/>
            <person name="Pelan S."/>
            <person name="Phillimore B."/>
            <person name="Povey S."/>
            <person name="Ramsey Y."/>
            <person name="Rand V."/>
            <person name="Scharfe M."/>
            <person name="Sehra H.K."/>
            <person name="Shownkeen R."/>
            <person name="Sims S.K."/>
            <person name="Skuce C.D."/>
            <person name="Smith M."/>
            <person name="Steward C.A."/>
            <person name="Swarbreck D."/>
            <person name="Sycamore N."/>
            <person name="Tester J."/>
            <person name="Thorpe A."/>
            <person name="Tracey A."/>
            <person name="Tromans A."/>
            <person name="Thomas D.W."/>
            <person name="Wall M."/>
            <person name="Wallis J.M."/>
            <person name="West A.P."/>
            <person name="Whitehead S.L."/>
            <person name="Willey D.L."/>
            <person name="Williams S.A."/>
            <person name="Wilming L."/>
            <person name="Wray P.W."/>
            <person name="Young L."/>
            <person name="Ashurst J.L."/>
            <person name="Coulson A."/>
            <person name="Blocker H."/>
            <person name="Durbin R.M."/>
            <person name="Sulston J.E."/>
            <person name="Hubbard T."/>
            <person name="Jackson M.J."/>
            <person name="Bentley D.R."/>
            <person name="Beck S."/>
            <person name="Rogers J."/>
            <person name="Dunham I."/>
        </authorList>
    </citation>
    <scope>NUCLEOTIDE SEQUENCE [LARGE SCALE GENOMIC DNA]</scope>
</reference>
<reference key="3">
    <citation type="journal article" date="2004" name="Genome Res.">
        <title>The status, quality, and expansion of the NIH full-length cDNA project: the Mammalian Gene Collection (MGC).</title>
        <authorList>
            <consortium name="The MGC Project Team"/>
        </authorList>
    </citation>
    <scope>NUCLEOTIDE SEQUENCE [LARGE SCALE MRNA]</scope>
    <source>
        <tissue>Skin</tissue>
    </source>
</reference>
<reference key="4">
    <citation type="journal article" date="2009" name="Science">
        <title>Lysine acetylation targets protein complexes and co-regulates major cellular functions.</title>
        <authorList>
            <person name="Choudhary C."/>
            <person name="Kumar C."/>
            <person name="Gnad F."/>
            <person name="Nielsen M.L."/>
            <person name="Rehman M."/>
            <person name="Walther T.C."/>
            <person name="Olsen J.V."/>
            <person name="Mann M."/>
        </authorList>
    </citation>
    <scope>ACETYLATION [LARGE SCALE ANALYSIS] AT LYS-15</scope>
    <scope>IDENTIFICATION BY MASS SPECTROMETRY [LARGE SCALE ANALYSIS]</scope>
</reference>
<reference key="5">
    <citation type="journal article" date="2014" name="J. Proteomics">
        <title>An enzyme assisted RP-RPLC approach for in-depth analysis of human liver phosphoproteome.</title>
        <authorList>
            <person name="Bian Y."/>
            <person name="Song C."/>
            <person name="Cheng K."/>
            <person name="Dong M."/>
            <person name="Wang F."/>
            <person name="Huang J."/>
            <person name="Sun D."/>
            <person name="Wang L."/>
            <person name="Ye M."/>
            <person name="Zou H."/>
        </authorList>
    </citation>
    <scope>IDENTIFICATION BY MASS SPECTROMETRY [LARGE SCALE ANALYSIS]</scope>
    <source>
        <tissue>Liver</tissue>
    </source>
</reference>
<reference key="6">
    <citation type="submission" date="2009-11" db="PDB data bank">
        <title>Crystal structure of human haloacid dehalogenase-like hydrolase domain containing 3 (HDHD3).</title>
        <authorList>
            <consortium name="Structural genomics consortium (SGC)"/>
        </authorList>
    </citation>
    <scope>X-RAY CRYSTALLOGRAPHY (1.55 ANGSTROMS) OF 8-247</scope>
</reference>
<keyword id="KW-0002">3D-structure</keyword>
<keyword id="KW-0007">Acetylation</keyword>
<keyword id="KW-1267">Proteomics identification</keyword>
<keyword id="KW-1185">Reference proteome</keyword>
<proteinExistence type="evidence at protein level"/>
<evidence type="ECO:0000250" key="1">
    <source>
        <dbReference type="UniProtKB" id="Q9CYW4"/>
    </source>
</evidence>
<evidence type="ECO:0000305" key="2"/>
<evidence type="ECO:0007744" key="3">
    <source>
    </source>
</evidence>
<evidence type="ECO:0007829" key="4">
    <source>
        <dbReference type="PDB" id="3K1Z"/>
    </source>
</evidence>
<dbReference type="EMBL" id="AK315401">
    <property type="protein sequence ID" value="BAG37794.1"/>
    <property type="molecule type" value="mRNA"/>
</dbReference>
<dbReference type="EMBL" id="AL137066">
    <property type="status" value="NOT_ANNOTATED_CDS"/>
    <property type="molecule type" value="Genomic_DNA"/>
</dbReference>
<dbReference type="EMBL" id="BC005048">
    <property type="protein sequence ID" value="AAH05048.1"/>
    <property type="molecule type" value="mRNA"/>
</dbReference>
<dbReference type="EMBL" id="BC031878">
    <property type="protein sequence ID" value="AAH31878.1"/>
    <property type="molecule type" value="mRNA"/>
</dbReference>
<dbReference type="CCDS" id="CCDS6793.1"/>
<dbReference type="RefSeq" id="NP_001291438.1">
    <property type="nucleotide sequence ID" value="NM_001304509.2"/>
</dbReference>
<dbReference type="RefSeq" id="NP_001291439.1">
    <property type="nucleotide sequence ID" value="NM_001304510.2"/>
</dbReference>
<dbReference type="RefSeq" id="NP_001291440.1">
    <property type="nucleotide sequence ID" value="NM_001304511.2"/>
</dbReference>
<dbReference type="RefSeq" id="NP_001358852.1">
    <property type="nucleotide sequence ID" value="NM_001371923.1"/>
</dbReference>
<dbReference type="RefSeq" id="NP_112496.1">
    <property type="nucleotide sequence ID" value="NM_031219.4"/>
</dbReference>
<dbReference type="PDB" id="3K1Z">
    <property type="method" value="X-ray"/>
    <property type="resolution" value="1.55 A"/>
    <property type="chains" value="A=8-247"/>
</dbReference>
<dbReference type="PDBsum" id="3K1Z"/>
<dbReference type="SMR" id="Q9BSH5"/>
<dbReference type="BioGRID" id="123632">
    <property type="interactions" value="60"/>
</dbReference>
<dbReference type="FunCoup" id="Q9BSH5">
    <property type="interactions" value="1093"/>
</dbReference>
<dbReference type="IntAct" id="Q9BSH5">
    <property type="interactions" value="24"/>
</dbReference>
<dbReference type="STRING" id="9606.ENSP00000238379"/>
<dbReference type="DEPOD" id="HDHD3"/>
<dbReference type="iPTMnet" id="Q9BSH5"/>
<dbReference type="PhosphoSitePlus" id="Q9BSH5"/>
<dbReference type="SwissPalm" id="Q9BSH5"/>
<dbReference type="BioMuta" id="HDHD3"/>
<dbReference type="DMDM" id="74752302"/>
<dbReference type="jPOST" id="Q9BSH5"/>
<dbReference type="MassIVE" id="Q9BSH5"/>
<dbReference type="PaxDb" id="9606-ENSP00000238379"/>
<dbReference type="PeptideAtlas" id="Q9BSH5"/>
<dbReference type="ProteomicsDB" id="78894"/>
<dbReference type="Pumba" id="Q9BSH5"/>
<dbReference type="Antibodypedia" id="15302">
    <property type="antibodies" value="164 antibodies from 23 providers"/>
</dbReference>
<dbReference type="DNASU" id="81932"/>
<dbReference type="Ensembl" id="ENST00000238379.9">
    <property type="protein sequence ID" value="ENSP00000238379.5"/>
    <property type="gene ID" value="ENSG00000119431.10"/>
</dbReference>
<dbReference type="Ensembl" id="ENST00000374180.4">
    <property type="protein sequence ID" value="ENSP00000363295.3"/>
    <property type="gene ID" value="ENSG00000119431.10"/>
</dbReference>
<dbReference type="GeneID" id="81932"/>
<dbReference type="KEGG" id="hsa:81932"/>
<dbReference type="MANE-Select" id="ENST00000374180.4">
    <property type="protein sequence ID" value="ENSP00000363295.3"/>
    <property type="RefSeq nucleotide sequence ID" value="NM_001304509.2"/>
    <property type="RefSeq protein sequence ID" value="NP_001291438.1"/>
</dbReference>
<dbReference type="UCSC" id="uc004bhi.2">
    <property type="organism name" value="human"/>
</dbReference>
<dbReference type="AGR" id="HGNC:28171"/>
<dbReference type="CTD" id="81932"/>
<dbReference type="DisGeNET" id="81932"/>
<dbReference type="GeneCards" id="HDHD3"/>
<dbReference type="HGNC" id="HGNC:28171">
    <property type="gene designation" value="HDHD3"/>
</dbReference>
<dbReference type="HPA" id="ENSG00000119431">
    <property type="expression patterns" value="Tissue enhanced (adrenal)"/>
</dbReference>
<dbReference type="neXtProt" id="NX_Q9BSH5"/>
<dbReference type="OpenTargets" id="ENSG00000119431"/>
<dbReference type="PharmGKB" id="PA134868152"/>
<dbReference type="VEuPathDB" id="HostDB:ENSG00000119431"/>
<dbReference type="eggNOG" id="KOG3085">
    <property type="taxonomic scope" value="Eukaryota"/>
</dbReference>
<dbReference type="GeneTree" id="ENSGT00390000015582"/>
<dbReference type="HOGENOM" id="CLU_045011_8_0_1"/>
<dbReference type="InParanoid" id="Q9BSH5"/>
<dbReference type="OMA" id="KCVGIIS"/>
<dbReference type="OrthoDB" id="444127at2759"/>
<dbReference type="PAN-GO" id="Q9BSH5">
    <property type="GO annotations" value="1 GO annotation based on evolutionary models"/>
</dbReference>
<dbReference type="PhylomeDB" id="Q9BSH5"/>
<dbReference type="TreeFam" id="TF315144"/>
<dbReference type="PathwayCommons" id="Q9BSH5"/>
<dbReference type="SignaLink" id="Q9BSH5"/>
<dbReference type="BioGRID-ORCS" id="81932">
    <property type="hits" value="10 hits in 1159 CRISPR screens"/>
</dbReference>
<dbReference type="ChiTaRS" id="HDHD3">
    <property type="organism name" value="human"/>
</dbReference>
<dbReference type="EvolutionaryTrace" id="Q9BSH5"/>
<dbReference type="GenomeRNAi" id="81932"/>
<dbReference type="Pharos" id="Q9BSH5">
    <property type="development level" value="Tdark"/>
</dbReference>
<dbReference type="PRO" id="PR:Q9BSH5"/>
<dbReference type="Proteomes" id="UP000005640">
    <property type="component" value="Chromosome 9"/>
</dbReference>
<dbReference type="RNAct" id="Q9BSH5">
    <property type="molecule type" value="protein"/>
</dbReference>
<dbReference type="Bgee" id="ENSG00000119431">
    <property type="expression patterns" value="Expressed in right adrenal gland and 150 other cell types or tissues"/>
</dbReference>
<dbReference type="GO" id="GO:0043231">
    <property type="term" value="C:intracellular membrane-bounded organelle"/>
    <property type="evidence" value="ECO:0000314"/>
    <property type="project" value="HPA"/>
</dbReference>
<dbReference type="GO" id="GO:0005739">
    <property type="term" value="C:mitochondrion"/>
    <property type="evidence" value="ECO:0006056"/>
    <property type="project" value="FlyBase"/>
</dbReference>
<dbReference type="GO" id="GO:0005730">
    <property type="term" value="C:nucleolus"/>
    <property type="evidence" value="ECO:0000314"/>
    <property type="project" value="HPA"/>
</dbReference>
<dbReference type="GO" id="GO:0005634">
    <property type="term" value="C:nucleus"/>
    <property type="evidence" value="ECO:0000318"/>
    <property type="project" value="GO_Central"/>
</dbReference>
<dbReference type="CDD" id="cd16415">
    <property type="entry name" value="HAD_dREG-2_like"/>
    <property type="match status" value="1"/>
</dbReference>
<dbReference type="Gene3D" id="3.40.50.1000">
    <property type="entry name" value="HAD superfamily/HAD-like"/>
    <property type="match status" value="1"/>
</dbReference>
<dbReference type="Gene3D" id="1.10.150.720">
    <property type="entry name" value="Haloacid dehalogenase-like hydrolase"/>
    <property type="match status" value="1"/>
</dbReference>
<dbReference type="InterPro" id="IPR051828">
    <property type="entry name" value="HAD-like_hydrolase_domain"/>
</dbReference>
<dbReference type="InterPro" id="IPR036412">
    <property type="entry name" value="HAD-like_sf"/>
</dbReference>
<dbReference type="InterPro" id="IPR006439">
    <property type="entry name" value="HAD-SF_hydro_IA"/>
</dbReference>
<dbReference type="InterPro" id="IPR011949">
    <property type="entry name" value="HAD-SF_hydro_IA_REG-2-like"/>
</dbReference>
<dbReference type="InterPro" id="IPR044924">
    <property type="entry name" value="HAD-SF_hydro_IA_REG-2-like_cap"/>
</dbReference>
<dbReference type="InterPro" id="IPR023214">
    <property type="entry name" value="HAD_sf"/>
</dbReference>
<dbReference type="NCBIfam" id="TIGR02252">
    <property type="entry name" value="DREG-2"/>
    <property type="match status" value="1"/>
</dbReference>
<dbReference type="NCBIfam" id="TIGR01549">
    <property type="entry name" value="HAD-SF-IA-v1"/>
    <property type="match status" value="1"/>
</dbReference>
<dbReference type="PANTHER" id="PTHR46191">
    <property type="match status" value="1"/>
</dbReference>
<dbReference type="PANTHER" id="PTHR46191:SF2">
    <property type="entry name" value="HALOACID DEHALOGENASE-LIKE HYDROLASE DOMAIN-CONTAINING PROTEIN 3"/>
    <property type="match status" value="1"/>
</dbReference>
<dbReference type="Pfam" id="PF00702">
    <property type="entry name" value="Hydrolase"/>
    <property type="match status" value="1"/>
</dbReference>
<dbReference type="PRINTS" id="PR00413">
    <property type="entry name" value="HADHALOGNASE"/>
</dbReference>
<dbReference type="SFLD" id="SFLDG01135">
    <property type="entry name" value="C1.5.6:_HAD__Beta-PGM__Phospha"/>
    <property type="match status" value="1"/>
</dbReference>
<dbReference type="SFLD" id="SFLDG01129">
    <property type="entry name" value="C1.5:_HAD__Beta-PGM__Phosphata"/>
    <property type="match status" value="1"/>
</dbReference>
<dbReference type="SUPFAM" id="SSF56784">
    <property type="entry name" value="HAD-like"/>
    <property type="match status" value="1"/>
</dbReference>
<comment type="interaction">
    <interactant intactId="EBI-745201">
        <id>Q9BSH5</id>
    </interactant>
    <interactant intactId="EBI-12006308">
        <id>Q7Z3C6-3</id>
        <label>ATG9A</label>
    </interactant>
    <organismsDiffer>false</organismsDiffer>
    <experiments>3</experiments>
</comment>
<comment type="interaction">
    <interactant intactId="EBI-745201">
        <id>Q9BSH5</id>
    </interactant>
    <interactant intactId="EBI-711360">
        <id>P33240</id>
        <label>CSTF2</label>
    </interactant>
    <organismsDiffer>false</organismsDiffer>
    <experiments>3</experiments>
</comment>
<comment type="interaction">
    <interactant intactId="EBI-745201">
        <id>Q9BSH5</id>
    </interactant>
    <interactant intactId="EBI-3867333">
        <id>A8MQ03</id>
        <label>CYSRT1</label>
    </interactant>
    <organismsDiffer>false</organismsDiffer>
    <experiments>3</experiments>
</comment>
<comment type="interaction">
    <interactant intactId="EBI-745201">
        <id>Q9BSH5</id>
    </interactant>
    <interactant intactId="EBI-2339898">
        <id>Q9NW38</id>
        <label>FANCL</label>
    </interactant>
    <organismsDiffer>false</organismsDiffer>
    <experiments>3</experiments>
</comment>
<comment type="interaction">
    <interactant intactId="EBI-745201">
        <id>Q9BSH5</id>
    </interactant>
    <interactant intactId="EBI-1759806">
        <id>O75593</id>
        <label>FOXH1</label>
    </interactant>
    <organismsDiffer>false</organismsDiffer>
    <experiments>3</experiments>
</comment>
<comment type="interaction">
    <interactant intactId="EBI-745201">
        <id>Q9BSH5</id>
    </interactant>
    <interactant intactId="EBI-6426443">
        <id>Q2WGJ6</id>
        <label>KLHL38</label>
    </interactant>
    <organismsDiffer>false</organismsDiffer>
    <experiments>3</experiments>
</comment>
<comment type="interaction">
    <interactant intactId="EBI-745201">
        <id>Q9BSH5</id>
    </interactant>
    <interactant intactId="EBI-15012270">
        <id>Q9H903</id>
        <label>MTHFD2L</label>
    </interactant>
    <organismsDiffer>false</organismsDiffer>
    <experiments>2</experiments>
</comment>
<comment type="interaction">
    <interactant intactId="EBI-745201">
        <id>Q9BSH5</id>
    </interactant>
    <interactant intactId="EBI-769257">
        <id>Q9NRQ2</id>
        <label>PLSCR4</label>
    </interactant>
    <organismsDiffer>false</organismsDiffer>
    <experiments>3</experiments>
</comment>
<comment type="interaction">
    <interactant intactId="EBI-745201">
        <id>Q9BSH5</id>
    </interactant>
    <interactant intactId="EBI-17236143">
        <id>Q12837</id>
        <label>POU4F2</label>
    </interactant>
    <organismsDiffer>false</organismsDiffer>
    <experiments>3</experiments>
</comment>
<comment type="interaction">
    <interactant intactId="EBI-745201">
        <id>Q9BSH5</id>
    </interactant>
    <interactant intactId="EBI-9027467">
        <id>O75360</id>
        <label>PROP1</label>
    </interactant>
    <organismsDiffer>false</organismsDiffer>
    <experiments>3</experiments>
</comment>
<comment type="interaction">
    <interactant intactId="EBI-745201">
        <id>Q9BSH5</id>
    </interactant>
    <interactant intactId="EBI-8463848">
        <id>Q8NB12</id>
        <label>SMYD1</label>
    </interactant>
    <organismsDiffer>false</organismsDiffer>
    <experiments>3</experiments>
</comment>
<comment type="interaction">
    <interactant intactId="EBI-745201">
        <id>Q9BSH5</id>
    </interactant>
    <interactant intactId="EBI-11741437">
        <id>Q08117-2</id>
        <label>TLE5</label>
    </interactant>
    <organismsDiffer>false</organismsDiffer>
    <experiments>3</experiments>
</comment>
<comment type="interaction">
    <interactant intactId="EBI-745201">
        <id>Q9BSH5</id>
    </interactant>
    <interactant intactId="EBI-358993">
        <id>Q15645</id>
        <label>TRIP13</label>
    </interactant>
    <organismsDiffer>false</organismsDiffer>
    <experiments>6</experiments>
</comment>
<comment type="interaction">
    <interactant intactId="EBI-745201">
        <id>Q9BSH5</id>
    </interactant>
    <interactant intactId="EBI-2107455">
        <id>Q08AM6</id>
        <label>VAC14</label>
    </interactant>
    <organismsDiffer>false</organismsDiffer>
    <experiments>3</experiments>
</comment>
<comment type="similarity">
    <text evidence="2">Belongs to the HAD-like hydrolase superfamily.</text>
</comment>
<organism>
    <name type="scientific">Homo sapiens</name>
    <name type="common">Human</name>
    <dbReference type="NCBI Taxonomy" id="9606"/>
    <lineage>
        <taxon>Eukaryota</taxon>
        <taxon>Metazoa</taxon>
        <taxon>Chordata</taxon>
        <taxon>Craniata</taxon>
        <taxon>Vertebrata</taxon>
        <taxon>Euteleostomi</taxon>
        <taxon>Mammalia</taxon>
        <taxon>Eutheria</taxon>
        <taxon>Euarchontoglires</taxon>
        <taxon>Primates</taxon>
        <taxon>Haplorrhini</taxon>
        <taxon>Catarrhini</taxon>
        <taxon>Hominidae</taxon>
        <taxon>Homo</taxon>
    </lineage>
</organism>
<feature type="chain" id="PRO_0000287313" description="Haloacid dehalogenase-like hydrolase domain-containing protein 3">
    <location>
        <begin position="1"/>
        <end position="251"/>
    </location>
</feature>
<feature type="modified residue" description="N6-acetyllysine; alternate" evidence="3">
    <location>
        <position position="15"/>
    </location>
</feature>
<feature type="modified residue" description="N6-succinyllysine; alternate" evidence="1">
    <location>
        <position position="15"/>
    </location>
</feature>
<feature type="sequence variant" id="VAR_032298" description="In dbSNP:rs1043836.">
    <original>G</original>
    <variation>E</variation>
    <location>
        <position position="146"/>
    </location>
</feature>
<feature type="strand" evidence="4">
    <location>
        <begin position="9"/>
        <end position="12"/>
    </location>
</feature>
<feature type="turn" evidence="4">
    <location>
        <begin position="16"/>
        <end position="18"/>
    </location>
</feature>
<feature type="strand" evidence="4">
    <location>
        <begin position="19"/>
        <end position="23"/>
    </location>
</feature>
<feature type="helix" evidence="4">
    <location>
        <begin position="25"/>
        <end position="35"/>
    </location>
</feature>
<feature type="helix" evidence="4">
    <location>
        <begin position="42"/>
        <end position="59"/>
    </location>
</feature>
<feature type="helix" evidence="4">
    <location>
        <begin position="62"/>
        <end position="67"/>
    </location>
</feature>
<feature type="helix" evidence="4">
    <location>
        <begin position="71"/>
        <end position="85"/>
    </location>
</feature>
<feature type="helix" evidence="4">
    <location>
        <begin position="91"/>
        <end position="104"/>
    </location>
</feature>
<feature type="helix" evidence="4">
    <location>
        <begin position="108"/>
        <end position="110"/>
    </location>
</feature>
<feature type="strand" evidence="4">
    <location>
        <begin position="111"/>
        <end position="113"/>
    </location>
</feature>
<feature type="helix" evidence="4">
    <location>
        <begin position="117"/>
        <end position="126"/>
    </location>
</feature>
<feature type="strand" evidence="4">
    <location>
        <begin position="130"/>
        <end position="136"/>
    </location>
</feature>
<feature type="helix" evidence="4">
    <location>
        <begin position="141"/>
        <end position="147"/>
    </location>
</feature>
<feature type="helix" evidence="4">
    <location>
        <begin position="151"/>
        <end position="153"/>
    </location>
</feature>
<feature type="strand" evidence="4">
    <location>
        <begin position="157"/>
        <end position="159"/>
    </location>
</feature>
<feature type="helix" evidence="4">
    <location>
        <begin position="160"/>
        <end position="163"/>
    </location>
</feature>
<feature type="helix" evidence="4">
    <location>
        <begin position="170"/>
        <end position="180"/>
    </location>
</feature>
<feature type="helix" evidence="4">
    <location>
        <begin position="184"/>
        <end position="186"/>
    </location>
</feature>
<feature type="strand" evidence="4">
    <location>
        <begin position="187"/>
        <end position="192"/>
    </location>
</feature>
<feature type="helix" evidence="4">
    <location>
        <begin position="194"/>
        <end position="197"/>
    </location>
</feature>
<feature type="helix" evidence="4">
    <location>
        <begin position="199"/>
        <end position="202"/>
    </location>
</feature>
<feature type="turn" evidence="4">
    <location>
        <begin position="203"/>
        <end position="205"/>
    </location>
</feature>
<feature type="strand" evidence="4">
    <location>
        <begin position="207"/>
        <end position="211"/>
    </location>
</feature>
<feature type="helix" evidence="4">
    <location>
        <begin position="219"/>
        <end position="224"/>
    </location>
</feature>
<feature type="helix" evidence="4">
    <location>
        <begin position="227"/>
        <end position="229"/>
    </location>
</feature>
<feature type="strand" evidence="4">
    <location>
        <begin position="230"/>
        <end position="233"/>
    </location>
</feature>
<feature type="helix" evidence="4">
    <location>
        <begin position="234"/>
        <end position="236"/>
    </location>
</feature>
<feature type="helix" evidence="4">
    <location>
        <begin position="237"/>
        <end position="246"/>
    </location>
</feature>
<sequence length="251" mass="28000">MAHRLQIRLLTWDVKDTLLRLRHPLGEAYATKARAHGLEVEPSALEQGFRQAYRAQSHSFPNYGLSHGLTSRQWWLDVVLQTFHLAGVQDAQAVAPIAEQLYKDFSHPCTWQVLDGAEDTLRECRTRGLRLAVISNFDRRLEGILGGLGLREHFDFVLTSEAAGWPKPDPRIFQEALRLAHMEPVVAAHVGDNYLCDYQGPRAVGMHSFLVVGPQALDPVVRDSVPKEHILPSLAHLLPALDCLEGSTPGL</sequence>
<protein>
    <recommendedName>
        <fullName>Haloacid dehalogenase-like hydrolase domain-containing protein 3</fullName>
    </recommendedName>
</protein>
<gene>
    <name type="primary">HDHD3</name>
    <name type="synonym">C9orf158</name>
</gene>